<sequence length="330" mass="37143">MDAGCTMGLSVTVFVMALLLSGAASLRIQAYFNKTADLPCQFTNSQSRSLSELVVFWQDQERLVLYELFLGREKPDNVDPKYIGRTSFDQESWNLQLHNVQIKDKGVYQCFVHHRGAKGLVPIYQMNSELSVLANFTQPEITLISNITRNSAINLTCSSVQGYPEPKKMFFVLKTENATTEYDGVIEKSQDNVTGLYNISISGSITFSDDIRNATIYCVLQTESTETYSQHFPIVPADPVPVEKPRLWIAAVALTLIVVCGIVLFLTLWKRKKEQQPGVCECETIKMDKAENEHVEERVKIHEPEKIPAKAAKCEHRLKTPSSDKSAAHF</sequence>
<protein>
    <recommendedName>
        <fullName>T-lymphocyte activation antigen CD86</fullName>
    </recommendedName>
    <alternativeName>
        <fullName>Activation B7-2 antigen</fullName>
    </alternativeName>
    <cdAntigenName>CD86</cdAntigenName>
</protein>
<proteinExistence type="evidence at transcript level"/>
<gene>
    <name type="primary">CD86</name>
</gene>
<feature type="signal peptide" evidence="4">
    <location>
        <begin position="1"/>
        <end position="22"/>
    </location>
</feature>
<feature type="chain" id="PRO_0000014552" description="T-lymphocyte activation antigen CD86">
    <location>
        <begin position="23"/>
        <end position="330"/>
    </location>
</feature>
<feature type="topological domain" description="Extracellular" evidence="4">
    <location>
        <begin position="23"/>
        <end position="247"/>
    </location>
</feature>
<feature type="transmembrane region" description="Helical" evidence="4">
    <location>
        <begin position="248"/>
        <end position="268"/>
    </location>
</feature>
<feature type="topological domain" description="Cytoplasmic" evidence="4">
    <location>
        <begin position="269"/>
        <end position="330"/>
    </location>
</feature>
<feature type="domain" description="Ig-like V-type">
    <location>
        <begin position="33"/>
        <end position="127"/>
    </location>
</feature>
<feature type="domain" description="Ig-like C2-type">
    <location>
        <begin position="150"/>
        <end position="225"/>
    </location>
</feature>
<feature type="glycosylation site" description="N-linked (GlcNAc...) asparagine" evidence="4">
    <location>
        <position position="33"/>
    </location>
</feature>
<feature type="glycosylation site" description="N-linked (GlcNAc...) asparagine" evidence="4">
    <location>
        <position position="135"/>
    </location>
</feature>
<feature type="glycosylation site" description="N-linked (GlcNAc...) asparagine" evidence="4">
    <location>
        <position position="146"/>
    </location>
</feature>
<feature type="glycosylation site" description="N-linked (GlcNAc...) asparagine" evidence="4">
    <location>
        <position position="154"/>
    </location>
</feature>
<feature type="glycosylation site" description="N-linked (GlcNAc...) asparagine" evidence="4">
    <location>
        <position position="177"/>
    </location>
</feature>
<feature type="glycosylation site" description="N-linked (GlcNAc...) asparagine" evidence="4">
    <location>
        <position position="192"/>
    </location>
</feature>
<feature type="glycosylation site" description="N-linked (GlcNAc...) asparagine" evidence="4">
    <location>
        <position position="198"/>
    </location>
</feature>
<feature type="glycosylation site" description="N-linked (GlcNAc...) asparagine" evidence="4">
    <location>
        <position position="213"/>
    </location>
</feature>
<feature type="disulfide bond" evidence="5">
    <location>
        <begin position="40"/>
        <end position="110"/>
    </location>
</feature>
<feature type="disulfide bond" evidence="5">
    <location>
        <begin position="157"/>
        <end position="218"/>
    </location>
</feature>
<dbReference type="EMBL" id="D49842">
    <property type="protein sequence ID" value="BAA08642.1"/>
    <property type="molecule type" value="mRNA"/>
</dbReference>
<dbReference type="PIR" id="I46691">
    <property type="entry name" value="I46691"/>
</dbReference>
<dbReference type="RefSeq" id="NP_001075677.1">
    <property type="nucleotide sequence ID" value="NM_001082208.1"/>
</dbReference>
<dbReference type="SMR" id="P42071"/>
<dbReference type="FunCoup" id="P42071">
    <property type="interactions" value="97"/>
</dbReference>
<dbReference type="STRING" id="9986.ENSOCUP00000035010"/>
<dbReference type="GlyCosmos" id="P42071">
    <property type="glycosylation" value="8 sites, No reported glycans"/>
</dbReference>
<dbReference type="PaxDb" id="9986-ENSOCUP00000009930"/>
<dbReference type="GeneID" id="100008999"/>
<dbReference type="KEGG" id="ocu:100008999"/>
<dbReference type="CTD" id="942"/>
<dbReference type="eggNOG" id="ENOG502S1FF">
    <property type="taxonomic scope" value="Eukaryota"/>
</dbReference>
<dbReference type="InParanoid" id="P42071"/>
<dbReference type="OrthoDB" id="5857426at2759"/>
<dbReference type="Proteomes" id="UP000001811">
    <property type="component" value="Unplaced"/>
</dbReference>
<dbReference type="GO" id="GO:0009897">
    <property type="term" value="C:external side of plasma membrane"/>
    <property type="evidence" value="ECO:0007669"/>
    <property type="project" value="TreeGrafter"/>
</dbReference>
<dbReference type="GO" id="GO:0002250">
    <property type="term" value="P:adaptive immune response"/>
    <property type="evidence" value="ECO:0007669"/>
    <property type="project" value="UniProtKB-KW"/>
</dbReference>
<dbReference type="GO" id="GO:0042113">
    <property type="term" value="P:B cell activation"/>
    <property type="evidence" value="ECO:0000250"/>
    <property type="project" value="UniProtKB"/>
</dbReference>
<dbReference type="GO" id="GO:0007166">
    <property type="term" value="P:cell surface receptor signaling pathway"/>
    <property type="evidence" value="ECO:0007669"/>
    <property type="project" value="TreeGrafter"/>
</dbReference>
<dbReference type="GO" id="GO:0071222">
    <property type="term" value="P:cellular response to lipopolysaccharide"/>
    <property type="evidence" value="ECO:0007669"/>
    <property type="project" value="TreeGrafter"/>
</dbReference>
<dbReference type="GO" id="GO:0042130">
    <property type="term" value="P:negative regulation of T cell proliferation"/>
    <property type="evidence" value="ECO:0007669"/>
    <property type="project" value="TreeGrafter"/>
</dbReference>
<dbReference type="GO" id="GO:0002639">
    <property type="term" value="P:positive regulation of immunoglobulin production"/>
    <property type="evidence" value="ECO:0000250"/>
    <property type="project" value="UniProtKB"/>
</dbReference>
<dbReference type="GO" id="GO:1901224">
    <property type="term" value="P:positive regulation of non-canonical NF-kappaB signal transduction"/>
    <property type="evidence" value="ECO:0000250"/>
    <property type="project" value="UniProtKB"/>
</dbReference>
<dbReference type="GO" id="GO:0042102">
    <property type="term" value="P:positive regulation of T cell proliferation"/>
    <property type="evidence" value="ECO:0007669"/>
    <property type="project" value="TreeGrafter"/>
</dbReference>
<dbReference type="GO" id="GO:0031295">
    <property type="term" value="P:T cell costimulation"/>
    <property type="evidence" value="ECO:0007669"/>
    <property type="project" value="TreeGrafter"/>
</dbReference>
<dbReference type="CDD" id="cd16087">
    <property type="entry name" value="IgV_CD86"/>
    <property type="match status" value="1"/>
</dbReference>
<dbReference type="FunFam" id="2.60.40.10:FF:000765">
    <property type="entry name" value="CD86 isoform 1"/>
    <property type="match status" value="1"/>
</dbReference>
<dbReference type="FunFam" id="2.60.40.10:FF:000582">
    <property type="entry name" value="T-lymphocyte activation antigen CD86"/>
    <property type="match status" value="1"/>
</dbReference>
<dbReference type="Gene3D" id="2.60.40.10">
    <property type="entry name" value="Immunoglobulins"/>
    <property type="match status" value="2"/>
</dbReference>
<dbReference type="InterPro" id="IPR037677">
    <property type="entry name" value="CD86_IgV"/>
</dbReference>
<dbReference type="InterPro" id="IPR007110">
    <property type="entry name" value="Ig-like_dom"/>
</dbReference>
<dbReference type="InterPro" id="IPR036179">
    <property type="entry name" value="Ig-like_dom_sf"/>
</dbReference>
<dbReference type="InterPro" id="IPR013783">
    <property type="entry name" value="Ig-like_fold"/>
</dbReference>
<dbReference type="InterPro" id="IPR003599">
    <property type="entry name" value="Ig_sub"/>
</dbReference>
<dbReference type="InterPro" id="IPR013106">
    <property type="entry name" value="Ig_V-set"/>
</dbReference>
<dbReference type="InterPro" id="IPR051713">
    <property type="entry name" value="T-cell_Activation_Regulation"/>
</dbReference>
<dbReference type="PANTHER" id="PTHR25466">
    <property type="entry name" value="T-LYMPHOCYTE ACTIVATION ANTIGEN"/>
    <property type="match status" value="1"/>
</dbReference>
<dbReference type="PANTHER" id="PTHR25466:SF2">
    <property type="entry name" value="T-LYMPHOCYTE ACTIVATION ANTIGEN CD86"/>
    <property type="match status" value="1"/>
</dbReference>
<dbReference type="Pfam" id="PF07686">
    <property type="entry name" value="V-set"/>
    <property type="match status" value="1"/>
</dbReference>
<dbReference type="SMART" id="SM00409">
    <property type="entry name" value="IG"/>
    <property type="match status" value="1"/>
</dbReference>
<dbReference type="SMART" id="SM00406">
    <property type="entry name" value="IGv"/>
    <property type="match status" value="1"/>
</dbReference>
<dbReference type="SUPFAM" id="SSF48726">
    <property type="entry name" value="Immunoglobulin"/>
    <property type="match status" value="1"/>
</dbReference>
<dbReference type="PROSITE" id="PS50835">
    <property type="entry name" value="IG_LIKE"/>
    <property type="match status" value="1"/>
</dbReference>
<dbReference type="PROSITE" id="PS00290">
    <property type="entry name" value="IG_MHC"/>
    <property type="match status" value="1"/>
</dbReference>
<name>CD86_RABIT</name>
<keyword id="KW-1064">Adaptive immunity</keyword>
<keyword id="KW-1003">Cell membrane</keyword>
<keyword id="KW-1015">Disulfide bond</keyword>
<keyword id="KW-0325">Glycoprotein</keyword>
<keyword id="KW-0391">Immunity</keyword>
<keyword id="KW-0393">Immunoglobulin domain</keyword>
<keyword id="KW-0472">Membrane</keyword>
<keyword id="KW-0675">Receptor</keyword>
<keyword id="KW-1185">Reference proteome</keyword>
<keyword id="KW-0732">Signal</keyword>
<keyword id="KW-0812">Transmembrane</keyword>
<keyword id="KW-1133">Transmembrane helix</keyword>
<keyword id="KW-0832">Ubl conjugation</keyword>
<comment type="function">
    <text evidence="3">Receptor involved in the costimulatory signal essential for T-lymphocyte proliferation and interleukin-2 production, by binding CD28 or CTLA-4. May play a critical role in the early events of T-cell activation and costimulation of naive T-cells, such as deciding between immunity and anergy that is made by T-cells within 24 hours after activation. Also involved in the regulation of B cells function, plays a role in regulating the level of IgG(1) produced. Upon CD40 engagement, activates NF-kappa-B signaling pathway via phospholipase C and protein kinase C activation (By similarity).</text>
</comment>
<comment type="subunit">
    <text evidence="2 3">Homodimer. Interacts with MARCH8 (By similarity). Interacts (via cytoplasmic domain) with PHB1 and PHB2; the interactions increases after priming with CD40 (By similarity). Interacts with CD28 (By similarity).</text>
</comment>
<comment type="subcellular location">
    <subcellularLocation>
        <location evidence="1">Cell membrane</location>
        <topology evidence="1">Single-pass type I membrane protein</topology>
    </subcellularLocation>
</comment>
<comment type="PTM">
    <text evidence="1">Polyubiquitinated; which is promoted by MARCH8 and results in endocytosis and lysosomal degradation.</text>
</comment>
<accession>P42071</accession>
<reference key="1">
    <citation type="journal article" date="1995" name="Immunogenetics">
        <title>Cloning and sequencing of the rabbit gene encoding T-cell costimulatory molecules.</title>
        <authorList>
            <person name="Isono T."/>
            <person name="Seto A."/>
        </authorList>
    </citation>
    <scope>NUCLEOTIDE SEQUENCE [MRNA]</scope>
    <source>
        <strain>B/J X Chbb:HM</strain>
    </source>
</reference>
<evidence type="ECO:0000250" key="1"/>
<evidence type="ECO:0000250" key="2">
    <source>
        <dbReference type="UniProtKB" id="P42081"/>
    </source>
</evidence>
<evidence type="ECO:0000250" key="3">
    <source>
        <dbReference type="UniProtKB" id="P42082"/>
    </source>
</evidence>
<evidence type="ECO:0000255" key="4"/>
<evidence type="ECO:0000255" key="5">
    <source>
        <dbReference type="PROSITE-ProRule" id="PRU00114"/>
    </source>
</evidence>
<organism>
    <name type="scientific">Oryctolagus cuniculus</name>
    <name type="common">Rabbit</name>
    <dbReference type="NCBI Taxonomy" id="9986"/>
    <lineage>
        <taxon>Eukaryota</taxon>
        <taxon>Metazoa</taxon>
        <taxon>Chordata</taxon>
        <taxon>Craniata</taxon>
        <taxon>Vertebrata</taxon>
        <taxon>Euteleostomi</taxon>
        <taxon>Mammalia</taxon>
        <taxon>Eutheria</taxon>
        <taxon>Euarchontoglires</taxon>
        <taxon>Glires</taxon>
        <taxon>Lagomorpha</taxon>
        <taxon>Leporidae</taxon>
        <taxon>Oryctolagus</taxon>
    </lineage>
</organism>